<accession>Q4FUW9</accession>
<keyword id="KW-0227">DNA damage</keyword>
<keyword id="KW-0234">DNA repair</keyword>
<keyword id="KW-0235">DNA replication</keyword>
<keyword id="KW-0436">Ligase</keyword>
<keyword id="KW-0460">Magnesium</keyword>
<keyword id="KW-0464">Manganese</keyword>
<keyword id="KW-0479">Metal-binding</keyword>
<keyword id="KW-0520">NAD</keyword>
<keyword id="KW-1185">Reference proteome</keyword>
<keyword id="KW-0862">Zinc</keyword>
<organism>
    <name type="scientific">Psychrobacter arcticus (strain DSM 17307 / VKM B-2377 / 273-4)</name>
    <dbReference type="NCBI Taxonomy" id="259536"/>
    <lineage>
        <taxon>Bacteria</taxon>
        <taxon>Pseudomonadati</taxon>
        <taxon>Pseudomonadota</taxon>
        <taxon>Gammaproteobacteria</taxon>
        <taxon>Moraxellales</taxon>
        <taxon>Moraxellaceae</taxon>
        <taxon>Psychrobacter</taxon>
    </lineage>
</organism>
<name>DNLJ_PSYA2</name>
<comment type="function">
    <text evidence="1">DNA ligase that catalyzes the formation of phosphodiester linkages between 5'-phosphoryl and 3'-hydroxyl groups in double-stranded DNA using NAD as a coenzyme and as the energy source for the reaction. It is essential for DNA replication and repair of damaged DNA.</text>
</comment>
<comment type="catalytic activity">
    <reaction evidence="1">
        <text>NAD(+) + (deoxyribonucleotide)n-3'-hydroxyl + 5'-phospho-(deoxyribonucleotide)m = (deoxyribonucleotide)n+m + AMP + beta-nicotinamide D-nucleotide.</text>
        <dbReference type="EC" id="6.5.1.2"/>
    </reaction>
</comment>
<comment type="cofactor">
    <cofactor evidence="1">
        <name>Mg(2+)</name>
        <dbReference type="ChEBI" id="CHEBI:18420"/>
    </cofactor>
    <cofactor evidence="1">
        <name>Mn(2+)</name>
        <dbReference type="ChEBI" id="CHEBI:29035"/>
    </cofactor>
</comment>
<comment type="similarity">
    <text evidence="1">Belongs to the NAD-dependent DNA ligase family. LigA subfamily.</text>
</comment>
<feature type="chain" id="PRO_0000313383" description="DNA ligase">
    <location>
        <begin position="1"/>
        <end position="691"/>
    </location>
</feature>
<feature type="domain" description="BRCT" evidence="1">
    <location>
        <begin position="613"/>
        <end position="691"/>
    </location>
</feature>
<feature type="active site" description="N6-AMP-lysine intermediate" evidence="1">
    <location>
        <position position="137"/>
    </location>
</feature>
<feature type="binding site" evidence="1">
    <location>
        <begin position="53"/>
        <end position="57"/>
    </location>
    <ligand>
        <name>NAD(+)</name>
        <dbReference type="ChEBI" id="CHEBI:57540"/>
    </ligand>
</feature>
<feature type="binding site" evidence="1">
    <location>
        <begin position="102"/>
        <end position="103"/>
    </location>
    <ligand>
        <name>NAD(+)</name>
        <dbReference type="ChEBI" id="CHEBI:57540"/>
    </ligand>
</feature>
<feature type="binding site" evidence="1">
    <location>
        <position position="135"/>
    </location>
    <ligand>
        <name>NAD(+)</name>
        <dbReference type="ChEBI" id="CHEBI:57540"/>
    </ligand>
</feature>
<feature type="binding site" evidence="1">
    <location>
        <position position="158"/>
    </location>
    <ligand>
        <name>NAD(+)</name>
        <dbReference type="ChEBI" id="CHEBI:57540"/>
    </ligand>
</feature>
<feature type="binding site" evidence="1">
    <location>
        <position position="195"/>
    </location>
    <ligand>
        <name>NAD(+)</name>
        <dbReference type="ChEBI" id="CHEBI:57540"/>
    </ligand>
</feature>
<feature type="binding site" evidence="1">
    <location>
        <position position="310"/>
    </location>
    <ligand>
        <name>NAD(+)</name>
        <dbReference type="ChEBI" id="CHEBI:57540"/>
    </ligand>
</feature>
<feature type="binding site" evidence="1">
    <location>
        <position position="334"/>
    </location>
    <ligand>
        <name>NAD(+)</name>
        <dbReference type="ChEBI" id="CHEBI:57540"/>
    </ligand>
</feature>
<feature type="binding site" evidence="1">
    <location>
        <position position="428"/>
    </location>
    <ligand>
        <name>Zn(2+)</name>
        <dbReference type="ChEBI" id="CHEBI:29105"/>
    </ligand>
</feature>
<feature type="binding site" evidence="1">
    <location>
        <position position="431"/>
    </location>
    <ligand>
        <name>Zn(2+)</name>
        <dbReference type="ChEBI" id="CHEBI:29105"/>
    </ligand>
</feature>
<feature type="binding site" evidence="1">
    <location>
        <position position="446"/>
    </location>
    <ligand>
        <name>Zn(2+)</name>
        <dbReference type="ChEBI" id="CHEBI:29105"/>
    </ligand>
</feature>
<feature type="binding site" evidence="1">
    <location>
        <position position="452"/>
    </location>
    <ligand>
        <name>Zn(2+)</name>
        <dbReference type="ChEBI" id="CHEBI:29105"/>
    </ligand>
</feature>
<sequence length="691" mass="76020">MTDAISPLTSKDIDTAKPITNDDAIVTQMRTFIDTLKQHNYAYYVLDNPILEDSEYDQLRRSLLELEEEYPDLVQPDSPINQVGDMPLPAFTQVTHDIPMLSLGNVFEYNDLRDFMRRVNDRLSVAQQSPEYEMELKLDGLAVSLKYVHGKFTQAVTRGDGQTGEDITQNAKTIRNMPLWLADAADIELLEVRGEVLMPKAGFERLNRLAAEKEEKTFANPRNAAAGSLRQLDPSVAASRPLAFYAYSVNQGLLDTIDTQSAALAWIKDIGFSVSAVEVVSNPREAQTYYESIIATRADLPFEIDGMVIKVNSLALQQQLGFLSREPRWATAYKFPAETVMTRLHAIDWQVGRTGQITPVGKLEPVKVGGVTVSNVTLHNFGEIQRLDVRAGDMVSVHRAGDVIPKVTRVWHEQRPENSEPVQLPSTCPVCDSPVVLPKDEALARCTGGLFCPAQQQEALIHFVSRRAMDIDGLGASWLISFFEHGLVKTVADIYQLHNHQEELVTLEKLGEKSVQNIISAIEASKHTTLSRFIYALGIRGVGETTAQNLAQQFGDLDALMSASIEKLLLTPDVGAITAELAYKFFRAPHNIEVITALREAGVHWDKVEQVVSEGLPLDGQTWVITGALDSMARDEAKAKLQALGAKVSGSISAKTTALLAGDKAGSKMAKAEKLGVKVVGEEEFLALVGE</sequence>
<gene>
    <name evidence="1" type="primary">ligA</name>
    <name type="ordered locus">Psyc_0320</name>
</gene>
<proteinExistence type="inferred from homology"/>
<protein>
    <recommendedName>
        <fullName evidence="1">DNA ligase</fullName>
        <ecNumber evidence="1">6.5.1.2</ecNumber>
    </recommendedName>
    <alternativeName>
        <fullName evidence="1">Polydeoxyribonucleotide synthase [NAD(+)]</fullName>
    </alternativeName>
</protein>
<evidence type="ECO:0000255" key="1">
    <source>
        <dbReference type="HAMAP-Rule" id="MF_01588"/>
    </source>
</evidence>
<reference key="1">
    <citation type="journal article" date="2010" name="Appl. Environ. Microbiol.">
        <title>The genome sequence of Psychrobacter arcticus 273-4, a psychroactive Siberian permafrost bacterium, reveals mechanisms for adaptation to low-temperature growth.</title>
        <authorList>
            <person name="Ayala-del-Rio H.L."/>
            <person name="Chain P.S."/>
            <person name="Grzymski J.J."/>
            <person name="Ponder M.A."/>
            <person name="Ivanova N."/>
            <person name="Bergholz P.W."/>
            <person name="Di Bartolo G."/>
            <person name="Hauser L."/>
            <person name="Land M."/>
            <person name="Bakermans C."/>
            <person name="Rodrigues D."/>
            <person name="Klappenbach J."/>
            <person name="Zarka D."/>
            <person name="Larimer F."/>
            <person name="Richardson P."/>
            <person name="Murray A."/>
            <person name="Thomashow M."/>
            <person name="Tiedje J.M."/>
        </authorList>
    </citation>
    <scope>NUCLEOTIDE SEQUENCE [LARGE SCALE GENOMIC DNA]</scope>
    <source>
        <strain>DSM 17307 / VKM B-2377 / 273-4</strain>
    </source>
</reference>
<dbReference type="EC" id="6.5.1.2" evidence="1"/>
<dbReference type="EMBL" id="CP000082">
    <property type="protein sequence ID" value="AAZ18189.1"/>
    <property type="molecule type" value="Genomic_DNA"/>
</dbReference>
<dbReference type="RefSeq" id="WP_011279627.1">
    <property type="nucleotide sequence ID" value="NC_007204.1"/>
</dbReference>
<dbReference type="SMR" id="Q4FUW9"/>
<dbReference type="STRING" id="259536.Psyc_0320"/>
<dbReference type="KEGG" id="par:Psyc_0320"/>
<dbReference type="eggNOG" id="COG0272">
    <property type="taxonomic scope" value="Bacteria"/>
</dbReference>
<dbReference type="HOGENOM" id="CLU_007764_2_1_6"/>
<dbReference type="OrthoDB" id="9759736at2"/>
<dbReference type="Proteomes" id="UP000000546">
    <property type="component" value="Chromosome"/>
</dbReference>
<dbReference type="GO" id="GO:0005829">
    <property type="term" value="C:cytosol"/>
    <property type="evidence" value="ECO:0007669"/>
    <property type="project" value="TreeGrafter"/>
</dbReference>
<dbReference type="GO" id="GO:0003677">
    <property type="term" value="F:DNA binding"/>
    <property type="evidence" value="ECO:0007669"/>
    <property type="project" value="InterPro"/>
</dbReference>
<dbReference type="GO" id="GO:0003911">
    <property type="term" value="F:DNA ligase (NAD+) activity"/>
    <property type="evidence" value="ECO:0007669"/>
    <property type="project" value="UniProtKB-UniRule"/>
</dbReference>
<dbReference type="GO" id="GO:0046872">
    <property type="term" value="F:metal ion binding"/>
    <property type="evidence" value="ECO:0007669"/>
    <property type="project" value="UniProtKB-KW"/>
</dbReference>
<dbReference type="GO" id="GO:0006281">
    <property type="term" value="P:DNA repair"/>
    <property type="evidence" value="ECO:0007669"/>
    <property type="project" value="UniProtKB-KW"/>
</dbReference>
<dbReference type="GO" id="GO:0006260">
    <property type="term" value="P:DNA replication"/>
    <property type="evidence" value="ECO:0007669"/>
    <property type="project" value="UniProtKB-KW"/>
</dbReference>
<dbReference type="CDD" id="cd17748">
    <property type="entry name" value="BRCT_DNA_ligase_like"/>
    <property type="match status" value="1"/>
</dbReference>
<dbReference type="CDD" id="cd00114">
    <property type="entry name" value="LIGANc"/>
    <property type="match status" value="1"/>
</dbReference>
<dbReference type="FunFam" id="1.10.150.20:FF:000006">
    <property type="entry name" value="DNA ligase"/>
    <property type="match status" value="1"/>
</dbReference>
<dbReference type="FunFam" id="1.10.150.20:FF:000007">
    <property type="entry name" value="DNA ligase"/>
    <property type="match status" value="1"/>
</dbReference>
<dbReference type="FunFam" id="2.40.50.140:FF:000012">
    <property type="entry name" value="DNA ligase"/>
    <property type="match status" value="1"/>
</dbReference>
<dbReference type="FunFam" id="3.30.470.30:FF:000001">
    <property type="entry name" value="DNA ligase"/>
    <property type="match status" value="1"/>
</dbReference>
<dbReference type="Gene3D" id="6.20.10.30">
    <property type="match status" value="1"/>
</dbReference>
<dbReference type="Gene3D" id="1.10.150.20">
    <property type="entry name" value="5' to 3' exonuclease, C-terminal subdomain"/>
    <property type="match status" value="2"/>
</dbReference>
<dbReference type="Gene3D" id="3.40.50.10190">
    <property type="entry name" value="BRCT domain"/>
    <property type="match status" value="1"/>
</dbReference>
<dbReference type="Gene3D" id="3.30.470.30">
    <property type="entry name" value="DNA ligase/mRNA capping enzyme"/>
    <property type="match status" value="1"/>
</dbReference>
<dbReference type="Gene3D" id="1.10.287.610">
    <property type="entry name" value="Helix hairpin bin"/>
    <property type="match status" value="1"/>
</dbReference>
<dbReference type="Gene3D" id="2.40.50.140">
    <property type="entry name" value="Nucleic acid-binding proteins"/>
    <property type="match status" value="1"/>
</dbReference>
<dbReference type="HAMAP" id="MF_01588">
    <property type="entry name" value="DNA_ligase_A"/>
    <property type="match status" value="1"/>
</dbReference>
<dbReference type="InterPro" id="IPR001357">
    <property type="entry name" value="BRCT_dom"/>
</dbReference>
<dbReference type="InterPro" id="IPR036420">
    <property type="entry name" value="BRCT_dom_sf"/>
</dbReference>
<dbReference type="InterPro" id="IPR041663">
    <property type="entry name" value="DisA/LigA_HHH"/>
</dbReference>
<dbReference type="InterPro" id="IPR001679">
    <property type="entry name" value="DNA_ligase"/>
</dbReference>
<dbReference type="InterPro" id="IPR018239">
    <property type="entry name" value="DNA_ligase_AS"/>
</dbReference>
<dbReference type="InterPro" id="IPR033136">
    <property type="entry name" value="DNA_ligase_CS"/>
</dbReference>
<dbReference type="InterPro" id="IPR013839">
    <property type="entry name" value="DNAligase_adenylation"/>
</dbReference>
<dbReference type="InterPro" id="IPR013840">
    <property type="entry name" value="DNAligase_N"/>
</dbReference>
<dbReference type="InterPro" id="IPR003583">
    <property type="entry name" value="Hlx-hairpin-Hlx_DNA-bd_motif"/>
</dbReference>
<dbReference type="InterPro" id="IPR012340">
    <property type="entry name" value="NA-bd_OB-fold"/>
</dbReference>
<dbReference type="InterPro" id="IPR004150">
    <property type="entry name" value="NAD_DNA_ligase_OB"/>
</dbReference>
<dbReference type="InterPro" id="IPR010994">
    <property type="entry name" value="RuvA_2-like"/>
</dbReference>
<dbReference type="InterPro" id="IPR004149">
    <property type="entry name" value="Znf_DNAligase_C4"/>
</dbReference>
<dbReference type="NCBIfam" id="TIGR00575">
    <property type="entry name" value="dnlj"/>
    <property type="match status" value="1"/>
</dbReference>
<dbReference type="NCBIfam" id="NF005932">
    <property type="entry name" value="PRK07956.1"/>
    <property type="match status" value="1"/>
</dbReference>
<dbReference type="PANTHER" id="PTHR23389">
    <property type="entry name" value="CHROMOSOME TRANSMISSION FIDELITY FACTOR 18"/>
    <property type="match status" value="1"/>
</dbReference>
<dbReference type="PANTHER" id="PTHR23389:SF9">
    <property type="entry name" value="DNA LIGASE"/>
    <property type="match status" value="1"/>
</dbReference>
<dbReference type="Pfam" id="PF00533">
    <property type="entry name" value="BRCT"/>
    <property type="match status" value="1"/>
</dbReference>
<dbReference type="Pfam" id="PF01653">
    <property type="entry name" value="DNA_ligase_aden"/>
    <property type="match status" value="1"/>
</dbReference>
<dbReference type="Pfam" id="PF03120">
    <property type="entry name" value="DNA_ligase_OB"/>
    <property type="match status" value="1"/>
</dbReference>
<dbReference type="Pfam" id="PF03119">
    <property type="entry name" value="DNA_ligase_ZBD"/>
    <property type="match status" value="1"/>
</dbReference>
<dbReference type="Pfam" id="PF12826">
    <property type="entry name" value="HHH_2"/>
    <property type="match status" value="1"/>
</dbReference>
<dbReference type="Pfam" id="PF14520">
    <property type="entry name" value="HHH_5"/>
    <property type="match status" value="1"/>
</dbReference>
<dbReference type="Pfam" id="PF22745">
    <property type="entry name" value="Nlig-Ia"/>
    <property type="match status" value="1"/>
</dbReference>
<dbReference type="PIRSF" id="PIRSF001604">
    <property type="entry name" value="LigA"/>
    <property type="match status" value="1"/>
</dbReference>
<dbReference type="SMART" id="SM00292">
    <property type="entry name" value="BRCT"/>
    <property type="match status" value="1"/>
</dbReference>
<dbReference type="SMART" id="SM00278">
    <property type="entry name" value="HhH1"/>
    <property type="match status" value="3"/>
</dbReference>
<dbReference type="SMART" id="SM00532">
    <property type="entry name" value="LIGANc"/>
    <property type="match status" value="1"/>
</dbReference>
<dbReference type="SUPFAM" id="SSF52113">
    <property type="entry name" value="BRCT domain"/>
    <property type="match status" value="1"/>
</dbReference>
<dbReference type="SUPFAM" id="SSF56091">
    <property type="entry name" value="DNA ligase/mRNA capping enzyme, catalytic domain"/>
    <property type="match status" value="1"/>
</dbReference>
<dbReference type="SUPFAM" id="SSF50249">
    <property type="entry name" value="Nucleic acid-binding proteins"/>
    <property type="match status" value="1"/>
</dbReference>
<dbReference type="SUPFAM" id="SSF47781">
    <property type="entry name" value="RuvA domain 2-like"/>
    <property type="match status" value="1"/>
</dbReference>
<dbReference type="PROSITE" id="PS50172">
    <property type="entry name" value="BRCT"/>
    <property type="match status" value="1"/>
</dbReference>
<dbReference type="PROSITE" id="PS01055">
    <property type="entry name" value="DNA_LIGASE_N1"/>
    <property type="match status" value="1"/>
</dbReference>
<dbReference type="PROSITE" id="PS01056">
    <property type="entry name" value="DNA_LIGASE_N2"/>
    <property type="match status" value="1"/>
</dbReference>